<reference key="1">
    <citation type="journal article" date="1989" name="J. Bacteriol.">
        <title>Initial cloning and sequencing of hydHG, an operon homologous to ntrBC and regulating the labile hydrogenase activity in Escherichia coli K-12.</title>
        <authorList>
            <person name="Stoker K."/>
            <person name="Reijnders W.N.M."/>
            <person name="Oltmann L.F."/>
            <person name="Stouthamer A.H."/>
        </authorList>
    </citation>
    <scope>NUCLEOTIDE SEQUENCE [GENOMIC DNA]</scope>
    <source>
        <strain>K12</strain>
    </source>
</reference>
<reference key="2">
    <citation type="journal article" date="1993" name="Nucleic Acids Res.">
        <title>Analysis of the Escherichia coli genome. IV. DNA sequence of the region from 89.2 to 92.8 minutes.</title>
        <authorList>
            <person name="Blattner F.R."/>
            <person name="Burland V.D."/>
            <person name="Plunkett G. III"/>
            <person name="Sofia H.J."/>
            <person name="Daniels D.L."/>
        </authorList>
    </citation>
    <scope>NUCLEOTIDE SEQUENCE [LARGE SCALE GENOMIC DNA]</scope>
    <source>
        <strain>K12 / MG1655 / ATCC 47076</strain>
    </source>
</reference>
<reference key="3">
    <citation type="journal article" date="1997" name="Science">
        <title>The complete genome sequence of Escherichia coli K-12.</title>
        <authorList>
            <person name="Blattner F.R."/>
            <person name="Plunkett G. III"/>
            <person name="Bloch C.A."/>
            <person name="Perna N.T."/>
            <person name="Burland V."/>
            <person name="Riley M."/>
            <person name="Collado-Vides J."/>
            <person name="Glasner J.D."/>
            <person name="Rode C.K."/>
            <person name="Mayhew G.F."/>
            <person name="Gregor J."/>
            <person name="Davis N.W."/>
            <person name="Kirkpatrick H.A."/>
            <person name="Goeden M.A."/>
            <person name="Rose D.J."/>
            <person name="Mau B."/>
            <person name="Shao Y."/>
        </authorList>
    </citation>
    <scope>NUCLEOTIDE SEQUENCE [LARGE SCALE GENOMIC DNA]</scope>
    <source>
        <strain>K12 / MG1655 / ATCC 47076</strain>
    </source>
</reference>
<reference key="4">
    <citation type="journal article" date="2006" name="Mol. Syst. Biol.">
        <title>Highly accurate genome sequences of Escherichia coli K-12 strains MG1655 and W3110.</title>
        <authorList>
            <person name="Hayashi K."/>
            <person name="Morooka N."/>
            <person name="Yamamoto Y."/>
            <person name="Fujita K."/>
            <person name="Isono K."/>
            <person name="Choi S."/>
            <person name="Ohtsubo E."/>
            <person name="Baba T."/>
            <person name="Wanner B.L."/>
            <person name="Mori H."/>
            <person name="Horiuchi T."/>
        </authorList>
    </citation>
    <scope>NUCLEOTIDE SEQUENCE [LARGE SCALE GENOMIC DNA]</scope>
    <source>
        <strain>K12 / W3110 / ATCC 27325 / DSM 5911</strain>
    </source>
</reference>
<reference key="5">
    <citation type="journal article" date="2001" name="J. Mol. Biol.">
        <title>The hydH/G genes from Escherichia coli code for a zinc and lead responsive two-component regulatory system.</title>
        <authorList>
            <person name="Leonhartsberger S."/>
            <person name="Huber A."/>
            <person name="Lottspeich F."/>
            <person name="Boeck A."/>
        </authorList>
    </citation>
    <scope>PROTEIN SEQUENCE OF N-TERMINUS</scope>
    <scope>FUNCTION</scope>
    <scope>DNA-BINDING</scope>
    <scope>SUBUNIT</scope>
    <scope>INDUCTION</scope>
    <source>
        <strain>K12 / MC4100 / ATCC 35695 / DSM 6574</strain>
    </source>
</reference>
<reference key="6">
    <citation type="journal article" date="2005" name="J. Biol. Chem.">
        <title>Functional characterization in vitro of all two-component signal transduction systems from Escherichia coli.</title>
        <authorList>
            <person name="Yamamoto K."/>
            <person name="Hirao K."/>
            <person name="Oshima T."/>
            <person name="Aiba H."/>
            <person name="Utsumi R."/>
            <person name="Ishihama A."/>
        </authorList>
    </citation>
    <scope>PHOSPHORYLATION</scope>
    <source>
        <strain>K12 / W3110 / ATCC 27325 / DSM 5911</strain>
    </source>
</reference>
<reference key="7">
    <citation type="journal article" date="2015" name="Biochem. J.">
        <title>Biophysical and physiological characterization of ZraP from Escherichia coli, the periplasmic accessory protein of the atypical ZraSR two-component system.</title>
        <authorList>
            <person name="Petit-Haertlein I."/>
            <person name="Rome K."/>
            <person name="de Rosny E."/>
            <person name="Molton F."/>
            <person name="Duboc C."/>
            <person name="Gueguen E."/>
            <person name="Rodrigue A."/>
            <person name="Coves J."/>
        </authorList>
    </citation>
    <scope>FUNCTION</scope>
    <scope>ACTIVITY REGULATION</scope>
    <scope>INDUCTION</scope>
    <scope>DISRUPTION PHENOTYPE</scope>
    <source>
        <strain>K12</strain>
    </source>
</reference>
<reference key="8">
    <citation type="journal article" date="2018" name="J. Mol. Biol.">
        <title>The Two-Component System ZraPSR Is a Novel ESR that Contributes to Intrinsic Antibiotic Tolerance in Escherichia coli.</title>
        <authorList>
            <person name="Rome K."/>
            <person name="Borde C."/>
            <person name="Taher R."/>
            <person name="Cayron J."/>
            <person name="Lesterlin C."/>
            <person name="Gueguen E."/>
            <person name="De Rosny E."/>
            <person name="Rodrigue A."/>
        </authorList>
    </citation>
    <scope>FUNCTION</scope>
    <scope>DISRUPTION PHENOTYPE</scope>
    <source>
        <strain>K12</strain>
    </source>
</reference>
<protein>
    <recommendedName>
        <fullName evidence="12">Transcriptional regulatory protein ZraR</fullName>
    </recommendedName>
</protein>
<proteinExistence type="evidence at protein level"/>
<sequence>MTHDNIDILVVDDDISHCTILQALLRGWGYNVALANSGRQALEQVREQVFDLVLCDVRMAEMDGIATLKEIKALNPAIPVLIMTAYSSVETAVEALKTGALDYLIKPLDFDNLQATLEKALAHTHSIDAETPAVTASQFGMVGKSPAMQHLLSEIALVAPSEATVLIHGDSGTGKELVARAIHASSARSEKPLVTLNCAALNESLLESELFGHEKGAFTGADKRREGRFVEADGGTLFLDEIGDISPMMQVRLLRAIQEREVQRVGSNQIISVDVRLIAATHRDLAAEVNAGRFRQDLYYRLNVVAIEVPSLRQRREDIPLLAGHFLQRFAERNRKAVKGFTPQAMDLLIHYDWPGNIRELENAVERAVVLLTGEYISERELPLAIASTPIPLGQSQDIQPLVEVEKEVILAALEKTGGNKTEAARQLGITRKTLLAKLSR</sequence>
<organism>
    <name type="scientific">Escherichia coli (strain K12)</name>
    <dbReference type="NCBI Taxonomy" id="83333"/>
    <lineage>
        <taxon>Bacteria</taxon>
        <taxon>Pseudomonadati</taxon>
        <taxon>Pseudomonadota</taxon>
        <taxon>Gammaproteobacteria</taxon>
        <taxon>Enterobacterales</taxon>
        <taxon>Enterobacteriaceae</taxon>
        <taxon>Escherichia</taxon>
    </lineage>
</organism>
<gene>
    <name evidence="10" type="primary">zraR</name>
    <name evidence="11" type="synonym">hydG</name>
    <name type="ordered locus">b4004</name>
    <name type="ordered locus">JW3968</name>
</gene>
<name>ZRAR_ECOLI</name>
<accession>P14375</accession>
<accession>Q2M8U1</accession>
<evidence type="ECO:0000250" key="1"/>
<evidence type="ECO:0000250" key="2">
    <source>
        <dbReference type="UniProtKB" id="P25852"/>
    </source>
</evidence>
<evidence type="ECO:0000255" key="3">
    <source>
        <dbReference type="PROSITE-ProRule" id="PRU00169"/>
    </source>
</evidence>
<evidence type="ECO:0000255" key="4">
    <source>
        <dbReference type="PROSITE-ProRule" id="PRU00193"/>
    </source>
</evidence>
<evidence type="ECO:0000269" key="5">
    <source>
    </source>
</evidence>
<evidence type="ECO:0000269" key="6">
    <source>
    </source>
</evidence>
<evidence type="ECO:0000269" key="7">
    <source>
    </source>
</evidence>
<evidence type="ECO:0000269" key="8">
    <source>
    </source>
</evidence>
<evidence type="ECO:0000269" key="9">
    <source>
    </source>
</evidence>
<evidence type="ECO:0000303" key="10">
    <source>
    </source>
</evidence>
<evidence type="ECO:0000303" key="11">
    <source>
    </source>
</evidence>
<evidence type="ECO:0000305" key="12"/>
<comment type="function">
    <text evidence="5 7 9">Part of the Zra signaling pathway, an envelope stress response (ESR) system composed of the periplasmic accessory protein ZraP, the histidine kinase ZraS and the transcriptional regulator ZraR (PubMed:26438879, PubMed:30389436). The ZraPSR system contributes to antibiotic resistance and is important for membrane integrity in the presence of membrane-targeting biocides (PubMed:30389436). ZraR is a member of the two-component regulatory system ZraS/ZraR (PubMed:11243806). When activated by ZraS, acts in conjunction with sigma-54 to regulate the expression of zraP in the presence of high Zn(2+) or Pb(2+) concentrations (PubMed:11243806). Also positively autoregulates the expression of the zraSR operon (PubMed:11243806). Binds to a region within the zraP-zraSR intergenic region that is characterized by two inverted repeats separated by a 14 bp spacer (PubMed:11243806). In addition, controls a regulon of genes of diverse functions that may be critical to maintain envelope integrity and cell survival under stressful conditions (PubMed:30389436). The system has no direct role in zinc or copper resistance (PubMed:26438879).</text>
</comment>
<comment type="activity regulation">
    <text evidence="7">Activity of the ZraS/ZraR two-component system is repressed by the zinc-bound form of ZraP, which probably interacts with the periplasmic region of ZraS.</text>
</comment>
<comment type="subunit">
    <text evidence="5">Monomer.</text>
</comment>
<comment type="subcellular location">
    <subcellularLocation>
        <location evidence="12">Cytoplasm</location>
    </subcellularLocation>
</comment>
<comment type="induction">
    <text evidence="5 7">Induced in response to high concentrations of Zn(2+) or Pb(2+) (PubMed:26438879). Expression of the zraSR operon is positively autoregulated by ZraR (PubMed:11243806). Expression also requires the RNA polymerase sigma-54 factor (PubMed:11243806).</text>
</comment>
<comment type="PTM">
    <text evidence="6">Phosphorylated by ZraS.</text>
</comment>
<comment type="disruption phenotype">
    <text evidence="7 9">Deletion of the gene confers increased susceptibility to five classes of antibiotics and to some environmental stresses targeting the envelope such as acidic pH and osmotic shock (PubMed:30389436). In the absence of stress, the mutants show no default in membrane integrity or in cell morphology as compared to the wild-type cells (PubMed:30389436). In the presence of drugs that target the envelope, the mutants show enhanced membrane disruption and abnormal cell shape (PubMed:30389436). Deletion does not affect the minimum inhibitory concentration (MIC) of E.coli for zinc or copper (PubMed:26438879).</text>
</comment>
<comment type="caution">
    <text evidence="5 8">Was originally thought to be involved in the regulation of the labile hydrogenase activity (PubMed:2666400). It was shown later that this activity results from the non-specific action of overproduced ZraR on hydrogenase 3 formation (PubMed:11243806).</text>
</comment>
<dbReference type="EMBL" id="M28369">
    <property type="protein sequence ID" value="AAA24004.1"/>
    <property type="molecule type" value="Genomic_DNA"/>
</dbReference>
<dbReference type="EMBL" id="U00006">
    <property type="protein sequence ID" value="AAC43102.1"/>
    <property type="molecule type" value="Genomic_DNA"/>
</dbReference>
<dbReference type="EMBL" id="U00096">
    <property type="protein sequence ID" value="AAC76978.1"/>
    <property type="molecule type" value="Genomic_DNA"/>
</dbReference>
<dbReference type="EMBL" id="AP009048">
    <property type="protein sequence ID" value="BAE77315.1"/>
    <property type="molecule type" value="Genomic_DNA"/>
</dbReference>
<dbReference type="PIR" id="G65207">
    <property type="entry name" value="B33862"/>
</dbReference>
<dbReference type="RefSeq" id="NP_418432.1">
    <property type="nucleotide sequence ID" value="NC_000913.3"/>
</dbReference>
<dbReference type="RefSeq" id="WP_000148503.1">
    <property type="nucleotide sequence ID" value="NZ_SSZK01000047.1"/>
</dbReference>
<dbReference type="SMR" id="P14375"/>
<dbReference type="BioGRID" id="4262463">
    <property type="interactions" value="126"/>
</dbReference>
<dbReference type="DIP" id="DIP-9980N"/>
<dbReference type="FunCoup" id="P14375">
    <property type="interactions" value="489"/>
</dbReference>
<dbReference type="STRING" id="511145.b4004"/>
<dbReference type="PaxDb" id="511145-b4004"/>
<dbReference type="EnsemblBacteria" id="AAC76978">
    <property type="protein sequence ID" value="AAC76978"/>
    <property type="gene ID" value="b4004"/>
</dbReference>
<dbReference type="GeneID" id="948505"/>
<dbReference type="KEGG" id="ecj:JW3968"/>
<dbReference type="KEGG" id="eco:b4004"/>
<dbReference type="KEGG" id="ecoc:C3026_21625"/>
<dbReference type="PATRIC" id="fig|1411691.4.peg.2706"/>
<dbReference type="EchoBASE" id="EB0477"/>
<dbReference type="eggNOG" id="COG2204">
    <property type="taxonomic scope" value="Bacteria"/>
</dbReference>
<dbReference type="HOGENOM" id="CLU_000445_0_6_6"/>
<dbReference type="InParanoid" id="P14375"/>
<dbReference type="OMA" id="RGWGYQV"/>
<dbReference type="OrthoDB" id="9804019at2"/>
<dbReference type="PhylomeDB" id="P14375"/>
<dbReference type="BioCyc" id="EcoCyc:HYDG-MONOMER"/>
<dbReference type="PRO" id="PR:P14375"/>
<dbReference type="Proteomes" id="UP000000625">
    <property type="component" value="Chromosome"/>
</dbReference>
<dbReference type="GO" id="GO:0005737">
    <property type="term" value="C:cytoplasm"/>
    <property type="evidence" value="ECO:0007669"/>
    <property type="project" value="UniProtKB-SubCell"/>
</dbReference>
<dbReference type="GO" id="GO:0032993">
    <property type="term" value="C:protein-DNA complex"/>
    <property type="evidence" value="ECO:0000318"/>
    <property type="project" value="GO_Central"/>
</dbReference>
<dbReference type="GO" id="GO:0005524">
    <property type="term" value="F:ATP binding"/>
    <property type="evidence" value="ECO:0007669"/>
    <property type="project" value="UniProtKB-KW"/>
</dbReference>
<dbReference type="GO" id="GO:0016887">
    <property type="term" value="F:ATP hydrolysis activity"/>
    <property type="evidence" value="ECO:0007669"/>
    <property type="project" value="InterPro"/>
</dbReference>
<dbReference type="GO" id="GO:0000987">
    <property type="term" value="F:cis-regulatory region sequence-specific DNA binding"/>
    <property type="evidence" value="ECO:0000318"/>
    <property type="project" value="GO_Central"/>
</dbReference>
<dbReference type="GO" id="GO:0003677">
    <property type="term" value="F:DNA binding"/>
    <property type="evidence" value="ECO:0000314"/>
    <property type="project" value="EcoliWiki"/>
</dbReference>
<dbReference type="GO" id="GO:0001216">
    <property type="term" value="F:DNA-binding transcription activator activity"/>
    <property type="evidence" value="ECO:0000318"/>
    <property type="project" value="GO_Central"/>
</dbReference>
<dbReference type="GO" id="GO:0000156">
    <property type="term" value="F:phosphorelay response regulator activity"/>
    <property type="evidence" value="ECO:0000314"/>
    <property type="project" value="EcoCyc"/>
</dbReference>
<dbReference type="GO" id="GO:0000160">
    <property type="term" value="P:phosphorelay signal transduction system"/>
    <property type="evidence" value="ECO:0000314"/>
    <property type="project" value="EcoCyc"/>
</dbReference>
<dbReference type="GO" id="GO:0045893">
    <property type="term" value="P:positive regulation of DNA-templated transcription"/>
    <property type="evidence" value="ECO:0000318"/>
    <property type="project" value="GO_Central"/>
</dbReference>
<dbReference type="CDD" id="cd00009">
    <property type="entry name" value="AAA"/>
    <property type="match status" value="1"/>
</dbReference>
<dbReference type="FunFam" id="1.10.8.60:FF:000014">
    <property type="entry name" value="DNA-binding transcriptional regulator NtrC"/>
    <property type="match status" value="1"/>
</dbReference>
<dbReference type="FunFam" id="3.40.50.2300:FF:000018">
    <property type="entry name" value="DNA-binding transcriptional regulator NtrC"/>
    <property type="match status" value="1"/>
</dbReference>
<dbReference type="FunFam" id="3.40.50.300:FF:000006">
    <property type="entry name" value="DNA-binding transcriptional regulator NtrC"/>
    <property type="match status" value="1"/>
</dbReference>
<dbReference type="Gene3D" id="1.10.8.60">
    <property type="match status" value="1"/>
</dbReference>
<dbReference type="Gene3D" id="3.40.50.2300">
    <property type="match status" value="1"/>
</dbReference>
<dbReference type="Gene3D" id="1.10.10.60">
    <property type="entry name" value="Homeodomain-like"/>
    <property type="match status" value="1"/>
</dbReference>
<dbReference type="Gene3D" id="3.40.50.300">
    <property type="entry name" value="P-loop containing nucleotide triphosphate hydrolases"/>
    <property type="match status" value="1"/>
</dbReference>
<dbReference type="InterPro" id="IPR003593">
    <property type="entry name" value="AAA+_ATPase"/>
</dbReference>
<dbReference type="InterPro" id="IPR011006">
    <property type="entry name" value="CheY-like_superfamily"/>
</dbReference>
<dbReference type="InterPro" id="IPR009057">
    <property type="entry name" value="Homeodomain-like_sf"/>
</dbReference>
<dbReference type="InterPro" id="IPR002197">
    <property type="entry name" value="HTH_Fis"/>
</dbReference>
<dbReference type="InterPro" id="IPR027417">
    <property type="entry name" value="P-loop_NTPase"/>
</dbReference>
<dbReference type="InterPro" id="IPR001789">
    <property type="entry name" value="Sig_transdc_resp-reg_receiver"/>
</dbReference>
<dbReference type="InterPro" id="IPR002078">
    <property type="entry name" value="Sigma_54_int"/>
</dbReference>
<dbReference type="InterPro" id="IPR025662">
    <property type="entry name" value="Sigma_54_int_dom_ATP-bd_1"/>
</dbReference>
<dbReference type="InterPro" id="IPR025943">
    <property type="entry name" value="Sigma_54_int_dom_ATP-bd_2"/>
</dbReference>
<dbReference type="InterPro" id="IPR025944">
    <property type="entry name" value="Sigma_54_int_dom_CS"/>
</dbReference>
<dbReference type="NCBIfam" id="NF007689">
    <property type="entry name" value="PRK10365.1"/>
    <property type="match status" value="1"/>
</dbReference>
<dbReference type="PANTHER" id="PTHR32071:SF117">
    <property type="entry name" value="PTS-DEPENDENT DIHYDROXYACETONE KINASE OPERON REGULATORY PROTEIN-RELATED"/>
    <property type="match status" value="1"/>
</dbReference>
<dbReference type="PANTHER" id="PTHR32071">
    <property type="entry name" value="TRANSCRIPTIONAL REGULATORY PROTEIN"/>
    <property type="match status" value="1"/>
</dbReference>
<dbReference type="Pfam" id="PF02954">
    <property type="entry name" value="HTH_8"/>
    <property type="match status" value="1"/>
</dbReference>
<dbReference type="Pfam" id="PF00072">
    <property type="entry name" value="Response_reg"/>
    <property type="match status" value="1"/>
</dbReference>
<dbReference type="Pfam" id="PF00158">
    <property type="entry name" value="Sigma54_activat"/>
    <property type="match status" value="1"/>
</dbReference>
<dbReference type="PRINTS" id="PR01590">
    <property type="entry name" value="HTHFIS"/>
</dbReference>
<dbReference type="SMART" id="SM00382">
    <property type="entry name" value="AAA"/>
    <property type="match status" value="1"/>
</dbReference>
<dbReference type="SMART" id="SM00448">
    <property type="entry name" value="REC"/>
    <property type="match status" value="1"/>
</dbReference>
<dbReference type="SUPFAM" id="SSF52172">
    <property type="entry name" value="CheY-like"/>
    <property type="match status" value="1"/>
</dbReference>
<dbReference type="SUPFAM" id="SSF46689">
    <property type="entry name" value="Homeodomain-like"/>
    <property type="match status" value="1"/>
</dbReference>
<dbReference type="SUPFAM" id="SSF52540">
    <property type="entry name" value="P-loop containing nucleoside triphosphate hydrolases"/>
    <property type="match status" value="1"/>
</dbReference>
<dbReference type="PROSITE" id="PS50110">
    <property type="entry name" value="RESPONSE_REGULATORY"/>
    <property type="match status" value="1"/>
</dbReference>
<dbReference type="PROSITE" id="PS00675">
    <property type="entry name" value="SIGMA54_INTERACT_1"/>
    <property type="match status" value="1"/>
</dbReference>
<dbReference type="PROSITE" id="PS00676">
    <property type="entry name" value="SIGMA54_INTERACT_2"/>
    <property type="match status" value="1"/>
</dbReference>
<dbReference type="PROSITE" id="PS00688">
    <property type="entry name" value="SIGMA54_INTERACT_3"/>
    <property type="match status" value="1"/>
</dbReference>
<dbReference type="PROSITE" id="PS50045">
    <property type="entry name" value="SIGMA54_INTERACT_4"/>
    <property type="match status" value="1"/>
</dbReference>
<keyword id="KW-0010">Activator</keyword>
<keyword id="KW-0067">ATP-binding</keyword>
<keyword id="KW-0963">Cytoplasm</keyword>
<keyword id="KW-0903">Direct protein sequencing</keyword>
<keyword id="KW-0238">DNA-binding</keyword>
<keyword id="KW-0547">Nucleotide-binding</keyword>
<keyword id="KW-0597">Phosphoprotein</keyword>
<keyword id="KW-1185">Reference proteome</keyword>
<keyword id="KW-0346">Stress response</keyword>
<keyword id="KW-0804">Transcription</keyword>
<keyword id="KW-0805">Transcription regulation</keyword>
<keyword id="KW-0902">Two-component regulatory system</keyword>
<feature type="chain" id="PRO_0000081279" description="Transcriptional regulatory protein ZraR">
    <location>
        <begin position="1"/>
        <end position="441"/>
    </location>
</feature>
<feature type="domain" description="Response regulatory" evidence="3">
    <location>
        <begin position="7"/>
        <end position="121"/>
    </location>
</feature>
<feature type="domain" description="Sigma-54 factor interaction" evidence="4">
    <location>
        <begin position="141"/>
        <end position="370"/>
    </location>
</feature>
<feature type="DNA-binding region" description="H-T-H motif" evidence="1">
    <location>
        <begin position="421"/>
        <end position="440"/>
    </location>
</feature>
<feature type="binding site" evidence="2">
    <location>
        <position position="172"/>
    </location>
    <ligand>
        <name>ATP</name>
        <dbReference type="ChEBI" id="CHEBI:30616"/>
    </ligand>
</feature>
<feature type="binding site" evidence="2">
    <location>
        <position position="173"/>
    </location>
    <ligand>
        <name>ATP</name>
        <dbReference type="ChEBI" id="CHEBI:30616"/>
    </ligand>
</feature>
<feature type="binding site" evidence="2">
    <location>
        <position position="329"/>
    </location>
    <ligand>
        <name>ATP</name>
        <dbReference type="ChEBI" id="CHEBI:30616"/>
    </ligand>
</feature>
<feature type="binding site" evidence="2">
    <location>
        <position position="359"/>
    </location>
    <ligand>
        <name>ATP</name>
        <dbReference type="ChEBI" id="CHEBI:30616"/>
    </ligand>
</feature>
<feature type="modified residue" description="4-aspartylphosphate" evidence="3">
    <location>
        <position position="56"/>
    </location>
</feature>
<feature type="sequence conflict" description="In Ref. 1; AAA24004." evidence="12" ref="1">
    <original>LEKALA</original>
    <variation>WKKRS</variation>
    <location>
        <begin position="117"/>
        <end position="122"/>
    </location>
</feature>
<feature type="sequence conflict" description="In Ref. 1; AAA24004." evidence="12" ref="1">
    <original>S</original>
    <variation>C</variation>
    <location>
        <position position="161"/>
    </location>
</feature>
<feature type="sequence conflict" description="In Ref. 1; AAA24004." evidence="12" ref="1">
    <original>GTG</original>
    <variation>AR</variation>
    <location>
        <begin position="172"/>
        <end position="174"/>
    </location>
</feature>
<feature type="sequence conflict" description="In Ref. 1; AAA24004." evidence="12" ref="1">
    <original>AI</original>
    <variation>GL</variation>
    <location>
        <begin position="181"/>
        <end position="182"/>
    </location>
</feature>
<feature type="sequence conflict" description="In Ref. 1; AAA24004." evidence="12" ref="1">
    <original>R</original>
    <variation>P</variation>
    <location>
        <position position="228"/>
    </location>
</feature>
<feature type="sequence conflict" description="In Ref. 1; AAA24004." evidence="12" ref="1">
    <original>LF</original>
    <variation>C</variation>
    <location>
        <begin position="237"/>
        <end position="238"/>
    </location>
</feature>
<feature type="sequence conflict" description="In Ref. 1; AAA24004." evidence="12" ref="1">
    <original>KAVKGFTPQAM</original>
    <variation>RGKRFYAPGL</variation>
    <location>
        <begin position="336"/>
        <end position="346"/>
    </location>
</feature>
<feature type="sequence conflict" description="In Ref. 1; AAA24004." evidence="12" ref="1">
    <original>A</original>
    <variation>G</variation>
    <location>
        <position position="385"/>
    </location>
</feature>